<gene>
    <name evidence="1" type="primary">leuA</name>
    <name type="ordered locus">swp_2213</name>
</gene>
<protein>
    <recommendedName>
        <fullName evidence="1">2-isopropylmalate synthase</fullName>
        <ecNumber evidence="1">2.3.3.13</ecNumber>
    </recommendedName>
    <alternativeName>
        <fullName evidence="1">Alpha-IPM synthase</fullName>
    </alternativeName>
    <alternativeName>
        <fullName evidence="1">Alpha-isopropylmalate synthase</fullName>
    </alternativeName>
</protein>
<accession>B8CM39</accession>
<dbReference type="EC" id="2.3.3.13" evidence="1"/>
<dbReference type="EMBL" id="CP000472">
    <property type="protein sequence ID" value="ACJ28963.1"/>
    <property type="molecule type" value="Genomic_DNA"/>
</dbReference>
<dbReference type="RefSeq" id="WP_020912324.1">
    <property type="nucleotide sequence ID" value="NC_011566.1"/>
</dbReference>
<dbReference type="SMR" id="B8CM39"/>
<dbReference type="STRING" id="225849.swp_2213"/>
<dbReference type="KEGG" id="swp:swp_2213"/>
<dbReference type="eggNOG" id="COG0119">
    <property type="taxonomic scope" value="Bacteria"/>
</dbReference>
<dbReference type="HOGENOM" id="CLU_022158_0_1_6"/>
<dbReference type="OrthoDB" id="9803573at2"/>
<dbReference type="UniPathway" id="UPA00048">
    <property type="reaction ID" value="UER00070"/>
</dbReference>
<dbReference type="Proteomes" id="UP000000753">
    <property type="component" value="Chromosome"/>
</dbReference>
<dbReference type="GO" id="GO:0005829">
    <property type="term" value="C:cytosol"/>
    <property type="evidence" value="ECO:0007669"/>
    <property type="project" value="TreeGrafter"/>
</dbReference>
<dbReference type="GO" id="GO:0003852">
    <property type="term" value="F:2-isopropylmalate synthase activity"/>
    <property type="evidence" value="ECO:0007669"/>
    <property type="project" value="UniProtKB-UniRule"/>
</dbReference>
<dbReference type="GO" id="GO:0003985">
    <property type="term" value="F:acetyl-CoA C-acetyltransferase activity"/>
    <property type="evidence" value="ECO:0007669"/>
    <property type="project" value="UniProtKB-UniRule"/>
</dbReference>
<dbReference type="GO" id="GO:0030145">
    <property type="term" value="F:manganese ion binding"/>
    <property type="evidence" value="ECO:0007669"/>
    <property type="project" value="UniProtKB-UniRule"/>
</dbReference>
<dbReference type="GO" id="GO:0009098">
    <property type="term" value="P:L-leucine biosynthetic process"/>
    <property type="evidence" value="ECO:0007669"/>
    <property type="project" value="UniProtKB-UniRule"/>
</dbReference>
<dbReference type="CDD" id="cd07940">
    <property type="entry name" value="DRE_TIM_IPMS"/>
    <property type="match status" value="1"/>
</dbReference>
<dbReference type="FunFam" id="1.10.238.260:FF:000001">
    <property type="entry name" value="2-isopropylmalate synthase"/>
    <property type="match status" value="1"/>
</dbReference>
<dbReference type="FunFam" id="3.20.20.70:FF:000010">
    <property type="entry name" value="2-isopropylmalate synthase"/>
    <property type="match status" value="1"/>
</dbReference>
<dbReference type="Gene3D" id="1.10.238.260">
    <property type="match status" value="1"/>
</dbReference>
<dbReference type="Gene3D" id="3.30.160.270">
    <property type="match status" value="1"/>
</dbReference>
<dbReference type="Gene3D" id="3.20.20.70">
    <property type="entry name" value="Aldolase class I"/>
    <property type="match status" value="1"/>
</dbReference>
<dbReference type="HAMAP" id="MF_01025">
    <property type="entry name" value="LeuA_type1"/>
    <property type="match status" value="1"/>
</dbReference>
<dbReference type="InterPro" id="IPR050073">
    <property type="entry name" value="2-IPM_HCS-like"/>
</dbReference>
<dbReference type="InterPro" id="IPR013709">
    <property type="entry name" value="2-isopropylmalate_synth_dimer"/>
</dbReference>
<dbReference type="InterPro" id="IPR002034">
    <property type="entry name" value="AIPM/Hcit_synth_CS"/>
</dbReference>
<dbReference type="InterPro" id="IPR013785">
    <property type="entry name" value="Aldolase_TIM"/>
</dbReference>
<dbReference type="InterPro" id="IPR054691">
    <property type="entry name" value="LeuA/HCS_post-cat"/>
</dbReference>
<dbReference type="InterPro" id="IPR036230">
    <property type="entry name" value="LeuA_allosteric_dom_sf"/>
</dbReference>
<dbReference type="InterPro" id="IPR005671">
    <property type="entry name" value="LeuA_bact_synth"/>
</dbReference>
<dbReference type="InterPro" id="IPR000891">
    <property type="entry name" value="PYR_CT"/>
</dbReference>
<dbReference type="NCBIfam" id="TIGR00973">
    <property type="entry name" value="leuA_bact"/>
    <property type="match status" value="1"/>
</dbReference>
<dbReference type="NCBIfam" id="NF002084">
    <property type="entry name" value="PRK00915.1-1"/>
    <property type="match status" value="1"/>
</dbReference>
<dbReference type="NCBIfam" id="NF002086">
    <property type="entry name" value="PRK00915.1-3"/>
    <property type="match status" value="1"/>
</dbReference>
<dbReference type="PANTHER" id="PTHR10277:SF9">
    <property type="entry name" value="2-ISOPROPYLMALATE SYNTHASE 1, CHLOROPLASTIC-RELATED"/>
    <property type="match status" value="1"/>
</dbReference>
<dbReference type="PANTHER" id="PTHR10277">
    <property type="entry name" value="HOMOCITRATE SYNTHASE-RELATED"/>
    <property type="match status" value="1"/>
</dbReference>
<dbReference type="Pfam" id="PF22617">
    <property type="entry name" value="HCS_D2"/>
    <property type="match status" value="1"/>
</dbReference>
<dbReference type="Pfam" id="PF00682">
    <property type="entry name" value="HMGL-like"/>
    <property type="match status" value="1"/>
</dbReference>
<dbReference type="Pfam" id="PF08502">
    <property type="entry name" value="LeuA_dimer"/>
    <property type="match status" value="1"/>
</dbReference>
<dbReference type="SMART" id="SM00917">
    <property type="entry name" value="LeuA_dimer"/>
    <property type="match status" value="1"/>
</dbReference>
<dbReference type="SUPFAM" id="SSF110921">
    <property type="entry name" value="2-isopropylmalate synthase LeuA, allosteric (dimerisation) domain"/>
    <property type="match status" value="1"/>
</dbReference>
<dbReference type="SUPFAM" id="SSF51569">
    <property type="entry name" value="Aldolase"/>
    <property type="match status" value="1"/>
</dbReference>
<dbReference type="PROSITE" id="PS00815">
    <property type="entry name" value="AIPM_HOMOCIT_SYNTH_1"/>
    <property type="match status" value="1"/>
</dbReference>
<dbReference type="PROSITE" id="PS00816">
    <property type="entry name" value="AIPM_HOMOCIT_SYNTH_2"/>
    <property type="match status" value="1"/>
</dbReference>
<dbReference type="PROSITE" id="PS50991">
    <property type="entry name" value="PYR_CT"/>
    <property type="match status" value="1"/>
</dbReference>
<name>LEU1_SHEPW</name>
<reference key="1">
    <citation type="journal article" date="2008" name="PLoS ONE">
        <title>Environmental adaptation: genomic analysis of the piezotolerant and psychrotolerant deep-sea iron reducing bacterium Shewanella piezotolerans WP3.</title>
        <authorList>
            <person name="Wang F."/>
            <person name="Wang J."/>
            <person name="Jian H."/>
            <person name="Zhang B."/>
            <person name="Li S."/>
            <person name="Wang F."/>
            <person name="Zeng X."/>
            <person name="Gao L."/>
            <person name="Bartlett D.H."/>
            <person name="Yu J."/>
            <person name="Hu S."/>
            <person name="Xiao X."/>
        </authorList>
    </citation>
    <scope>NUCLEOTIDE SEQUENCE [LARGE SCALE GENOMIC DNA]</scope>
    <source>
        <strain>WP3 / JCM 13877</strain>
    </source>
</reference>
<proteinExistence type="inferred from homology"/>
<comment type="function">
    <text evidence="1">Catalyzes the condensation of the acetyl group of acetyl-CoA with 3-methyl-2-oxobutanoate (2-ketoisovalerate) to form 3-carboxy-3-hydroxy-4-methylpentanoate (2-isopropylmalate).</text>
</comment>
<comment type="catalytic activity">
    <reaction evidence="1">
        <text>3-methyl-2-oxobutanoate + acetyl-CoA + H2O = (2S)-2-isopropylmalate + CoA + H(+)</text>
        <dbReference type="Rhea" id="RHEA:21524"/>
        <dbReference type="ChEBI" id="CHEBI:1178"/>
        <dbReference type="ChEBI" id="CHEBI:11851"/>
        <dbReference type="ChEBI" id="CHEBI:15377"/>
        <dbReference type="ChEBI" id="CHEBI:15378"/>
        <dbReference type="ChEBI" id="CHEBI:57287"/>
        <dbReference type="ChEBI" id="CHEBI:57288"/>
        <dbReference type="EC" id="2.3.3.13"/>
    </reaction>
</comment>
<comment type="cofactor">
    <cofactor evidence="1">
        <name>Mn(2+)</name>
        <dbReference type="ChEBI" id="CHEBI:29035"/>
    </cofactor>
</comment>
<comment type="pathway">
    <text evidence="1">Amino-acid biosynthesis; L-leucine biosynthesis; L-leucine from 3-methyl-2-oxobutanoate: step 1/4.</text>
</comment>
<comment type="subunit">
    <text evidence="1">Homodimer.</text>
</comment>
<comment type="subcellular location">
    <subcellularLocation>
        <location evidence="1">Cytoplasm</location>
    </subcellularLocation>
</comment>
<comment type="similarity">
    <text evidence="1">Belongs to the alpha-IPM synthase/homocitrate synthase family. LeuA type 1 subfamily.</text>
</comment>
<sequence length="523" mass="56697">MSDRVIIFDTTLRDGEQALAASLTVKEKLQIALALERLGVDVMEVGFPVSSPGDFESVQTIARTVKNSRVCALSRALEKDIDAAAQALSVADQFRIHTFISTSTIHVESKLKRSFDQVLEMAVGAVKYARRFTDDVEFSCEDAGRTPIDNLCRMVEEAIKAGARTINIPDTVGYTVPSEFGGIIQTLFNRVPNIDQAVISVHCHDDLGLSVANSITAVQHGARQIECTVNGIGERAGNCSLEEIAMILSTRKGELGLETGINAKEIHRTSSLVSQLCNMPVQANKAIVGANAFTHSSGIHQDGMLKAQNTYEIMTPESIGLNRNNLNMTSRSGRHVIKHRMSELGYGDQDYDMDVLYEDFLVLADKKGQVFDYDLEALAFMEAQAEDDDHFKLQQLVVHSDSTEGSATATVKVEVNGETVTEAAIGNGPVDAAYKAVARASGCEIDITSYQLGAKGEGQNALGQVDITASYRNQNFHGVGLATDVVEASVKALVHVMNLTWRADKVADCKQKIQQEKQVLGGV</sequence>
<organism>
    <name type="scientific">Shewanella piezotolerans (strain WP3 / JCM 13877)</name>
    <dbReference type="NCBI Taxonomy" id="225849"/>
    <lineage>
        <taxon>Bacteria</taxon>
        <taxon>Pseudomonadati</taxon>
        <taxon>Pseudomonadota</taxon>
        <taxon>Gammaproteobacteria</taxon>
        <taxon>Alteromonadales</taxon>
        <taxon>Shewanellaceae</taxon>
        <taxon>Shewanella</taxon>
    </lineage>
</organism>
<evidence type="ECO:0000255" key="1">
    <source>
        <dbReference type="HAMAP-Rule" id="MF_01025"/>
    </source>
</evidence>
<keyword id="KW-0028">Amino-acid biosynthesis</keyword>
<keyword id="KW-0100">Branched-chain amino acid biosynthesis</keyword>
<keyword id="KW-0963">Cytoplasm</keyword>
<keyword id="KW-0432">Leucine biosynthesis</keyword>
<keyword id="KW-0464">Manganese</keyword>
<keyword id="KW-0479">Metal-binding</keyword>
<keyword id="KW-0808">Transferase</keyword>
<feature type="chain" id="PRO_1000149288" description="2-isopropylmalate synthase">
    <location>
        <begin position="1"/>
        <end position="523"/>
    </location>
</feature>
<feature type="domain" description="Pyruvate carboxyltransferase" evidence="1">
    <location>
        <begin position="5"/>
        <end position="267"/>
    </location>
</feature>
<feature type="region of interest" description="Regulatory domain" evidence="1">
    <location>
        <begin position="392"/>
        <end position="523"/>
    </location>
</feature>
<feature type="binding site" evidence="1">
    <location>
        <position position="14"/>
    </location>
    <ligand>
        <name>Mn(2+)</name>
        <dbReference type="ChEBI" id="CHEBI:29035"/>
    </ligand>
</feature>
<feature type="binding site" evidence="1">
    <location>
        <position position="202"/>
    </location>
    <ligand>
        <name>Mn(2+)</name>
        <dbReference type="ChEBI" id="CHEBI:29035"/>
    </ligand>
</feature>
<feature type="binding site" evidence="1">
    <location>
        <position position="204"/>
    </location>
    <ligand>
        <name>Mn(2+)</name>
        <dbReference type="ChEBI" id="CHEBI:29035"/>
    </ligand>
</feature>
<feature type="binding site" evidence="1">
    <location>
        <position position="238"/>
    </location>
    <ligand>
        <name>Mn(2+)</name>
        <dbReference type="ChEBI" id="CHEBI:29035"/>
    </ligand>
</feature>